<accession>P59576</accession>
<gene>
    <name evidence="1" type="primary">carA</name>
    <name type="ordered locus">bbp_135</name>
</gene>
<reference key="1">
    <citation type="journal article" date="2003" name="Proc. Natl. Acad. Sci. U.S.A.">
        <title>Reductive genome evolution in Buchnera aphidicola.</title>
        <authorList>
            <person name="van Ham R.C.H.J."/>
            <person name="Kamerbeek J."/>
            <person name="Palacios C."/>
            <person name="Rausell C."/>
            <person name="Abascal F."/>
            <person name="Bastolla U."/>
            <person name="Fernandez J.M."/>
            <person name="Jimenez L."/>
            <person name="Postigo M."/>
            <person name="Silva F.J."/>
            <person name="Tamames J."/>
            <person name="Viguera E."/>
            <person name="Latorre A."/>
            <person name="Valencia A."/>
            <person name="Moran F."/>
            <person name="Moya A."/>
        </authorList>
    </citation>
    <scope>NUCLEOTIDE SEQUENCE [LARGE SCALE GENOMIC DNA]</scope>
    <source>
        <strain>Bp</strain>
    </source>
</reference>
<feature type="chain" id="PRO_0000112263" description="Carbamoyl phosphate synthase small chain">
    <location>
        <begin position="1"/>
        <end position="397"/>
    </location>
</feature>
<feature type="domain" description="Glutamine amidotransferase type-1" evidence="1">
    <location>
        <begin position="204"/>
        <end position="391"/>
    </location>
</feature>
<feature type="region of interest" description="CPSase" evidence="1">
    <location>
        <begin position="1"/>
        <end position="204"/>
    </location>
</feature>
<feature type="active site" description="Nucleophile" evidence="1">
    <location>
        <position position="280"/>
    </location>
</feature>
<feature type="active site" evidence="1">
    <location>
        <position position="364"/>
    </location>
</feature>
<feature type="active site" evidence="1">
    <location>
        <position position="366"/>
    </location>
</feature>
<feature type="binding site" evidence="1">
    <location>
        <position position="57"/>
    </location>
    <ligand>
        <name>L-glutamine</name>
        <dbReference type="ChEBI" id="CHEBI:58359"/>
    </ligand>
</feature>
<feature type="binding site" evidence="1">
    <location>
        <position position="252"/>
    </location>
    <ligand>
        <name>L-glutamine</name>
        <dbReference type="ChEBI" id="CHEBI:58359"/>
    </ligand>
</feature>
<feature type="binding site" evidence="1">
    <location>
        <position position="254"/>
    </location>
    <ligand>
        <name>L-glutamine</name>
        <dbReference type="ChEBI" id="CHEBI:58359"/>
    </ligand>
</feature>
<feature type="binding site" evidence="1">
    <location>
        <position position="281"/>
    </location>
    <ligand>
        <name>L-glutamine</name>
        <dbReference type="ChEBI" id="CHEBI:58359"/>
    </ligand>
</feature>
<feature type="binding site" evidence="1">
    <location>
        <position position="284"/>
    </location>
    <ligand>
        <name>L-glutamine</name>
        <dbReference type="ChEBI" id="CHEBI:58359"/>
    </ligand>
</feature>
<feature type="binding site" evidence="1">
    <location>
        <position position="322"/>
    </location>
    <ligand>
        <name>L-glutamine</name>
        <dbReference type="ChEBI" id="CHEBI:58359"/>
    </ligand>
</feature>
<feature type="binding site" evidence="1">
    <location>
        <position position="325"/>
    </location>
    <ligand>
        <name>L-glutamine</name>
        <dbReference type="ChEBI" id="CHEBI:58359"/>
    </ligand>
</feature>
<comment type="function">
    <text evidence="1">Small subunit of the glutamine-dependent carbamoyl phosphate synthetase (CPSase). CPSase catalyzes the formation of carbamoyl phosphate from the ammonia moiety of glutamine, carbonate, and phosphate donated by ATP, constituting the first step of 2 biosynthetic pathways, one leading to arginine and/or urea and the other to pyrimidine nucleotides. The small subunit (glutamine amidotransferase) binds and cleaves glutamine to supply the large subunit with the substrate ammonia.</text>
</comment>
<comment type="catalytic activity">
    <reaction evidence="1">
        <text>hydrogencarbonate + L-glutamine + 2 ATP + H2O = carbamoyl phosphate + L-glutamate + 2 ADP + phosphate + 2 H(+)</text>
        <dbReference type="Rhea" id="RHEA:18633"/>
        <dbReference type="ChEBI" id="CHEBI:15377"/>
        <dbReference type="ChEBI" id="CHEBI:15378"/>
        <dbReference type="ChEBI" id="CHEBI:17544"/>
        <dbReference type="ChEBI" id="CHEBI:29985"/>
        <dbReference type="ChEBI" id="CHEBI:30616"/>
        <dbReference type="ChEBI" id="CHEBI:43474"/>
        <dbReference type="ChEBI" id="CHEBI:58228"/>
        <dbReference type="ChEBI" id="CHEBI:58359"/>
        <dbReference type="ChEBI" id="CHEBI:456216"/>
        <dbReference type="EC" id="6.3.5.5"/>
    </reaction>
</comment>
<comment type="catalytic activity">
    <molecule>Carbamoyl phosphate synthase small chain</molecule>
    <reaction evidence="1">
        <text>L-glutamine + H2O = L-glutamate + NH4(+)</text>
        <dbReference type="Rhea" id="RHEA:15889"/>
        <dbReference type="ChEBI" id="CHEBI:15377"/>
        <dbReference type="ChEBI" id="CHEBI:28938"/>
        <dbReference type="ChEBI" id="CHEBI:29985"/>
        <dbReference type="ChEBI" id="CHEBI:58359"/>
    </reaction>
</comment>
<comment type="pathway">
    <text evidence="1">Amino-acid biosynthesis; L-arginine biosynthesis; carbamoyl phosphate from bicarbonate: step 1/1.</text>
</comment>
<comment type="pathway">
    <text evidence="1">Pyrimidine metabolism; UMP biosynthesis via de novo pathway; (S)-dihydroorotate from bicarbonate: step 1/3.</text>
</comment>
<comment type="subunit">
    <text evidence="1">Composed of two chains; the small (or glutamine) chain promotes the hydrolysis of glutamine to ammonia, which is used by the large (or ammonia) chain to synthesize carbamoyl phosphate. Tetramer of heterodimers (alpha,beta)4.</text>
</comment>
<comment type="similarity">
    <text evidence="1">Belongs to the CarA family.</text>
</comment>
<dbReference type="EC" id="6.3.5.5" evidence="1"/>
<dbReference type="EMBL" id="AE016826">
    <property type="protein sequence ID" value="AAO26869.1"/>
    <property type="molecule type" value="Genomic_DNA"/>
</dbReference>
<dbReference type="SMR" id="P59576"/>
<dbReference type="STRING" id="224915.bbp_135"/>
<dbReference type="KEGG" id="bab:bbp_135"/>
<dbReference type="eggNOG" id="COG0505">
    <property type="taxonomic scope" value="Bacteria"/>
</dbReference>
<dbReference type="HOGENOM" id="CLU_035901_2_1_6"/>
<dbReference type="OrthoDB" id="9804328at2"/>
<dbReference type="UniPathway" id="UPA00068">
    <property type="reaction ID" value="UER00171"/>
</dbReference>
<dbReference type="UniPathway" id="UPA00070">
    <property type="reaction ID" value="UER00115"/>
</dbReference>
<dbReference type="Proteomes" id="UP000000601">
    <property type="component" value="Chromosome"/>
</dbReference>
<dbReference type="GO" id="GO:0005524">
    <property type="term" value="F:ATP binding"/>
    <property type="evidence" value="ECO:0007669"/>
    <property type="project" value="UniProtKB-UniRule"/>
</dbReference>
<dbReference type="GO" id="GO:0004088">
    <property type="term" value="F:carbamoyl-phosphate synthase (glutamine-hydrolyzing) activity"/>
    <property type="evidence" value="ECO:0007669"/>
    <property type="project" value="UniProtKB-UniRule"/>
</dbReference>
<dbReference type="GO" id="GO:0004359">
    <property type="term" value="F:glutaminase activity"/>
    <property type="evidence" value="ECO:0007669"/>
    <property type="project" value="RHEA"/>
</dbReference>
<dbReference type="GO" id="GO:0006207">
    <property type="term" value="P:'de novo' pyrimidine nucleobase biosynthetic process"/>
    <property type="evidence" value="ECO:0007669"/>
    <property type="project" value="InterPro"/>
</dbReference>
<dbReference type="GO" id="GO:0044205">
    <property type="term" value="P:'de novo' UMP biosynthetic process"/>
    <property type="evidence" value="ECO:0007669"/>
    <property type="project" value="UniProtKB-UniRule"/>
</dbReference>
<dbReference type="GO" id="GO:0006541">
    <property type="term" value="P:glutamine metabolic process"/>
    <property type="evidence" value="ECO:0007669"/>
    <property type="project" value="InterPro"/>
</dbReference>
<dbReference type="GO" id="GO:0006526">
    <property type="term" value="P:L-arginine biosynthetic process"/>
    <property type="evidence" value="ECO:0007669"/>
    <property type="project" value="UniProtKB-UniRule"/>
</dbReference>
<dbReference type="CDD" id="cd01744">
    <property type="entry name" value="GATase1_CPSase"/>
    <property type="match status" value="1"/>
</dbReference>
<dbReference type="FunFam" id="3.50.30.20:FF:000001">
    <property type="entry name" value="Carbamoyl-phosphate synthase small chain"/>
    <property type="match status" value="1"/>
</dbReference>
<dbReference type="Gene3D" id="3.40.50.880">
    <property type="match status" value="1"/>
</dbReference>
<dbReference type="Gene3D" id="3.50.30.20">
    <property type="entry name" value="Carbamoyl-phosphate synthase small subunit, N-terminal domain"/>
    <property type="match status" value="1"/>
</dbReference>
<dbReference type="HAMAP" id="MF_01209">
    <property type="entry name" value="CPSase_S_chain"/>
    <property type="match status" value="1"/>
</dbReference>
<dbReference type="InterPro" id="IPR050472">
    <property type="entry name" value="Anth_synth/Amidotransfase"/>
</dbReference>
<dbReference type="InterPro" id="IPR006274">
    <property type="entry name" value="CarbamoylP_synth_ssu"/>
</dbReference>
<dbReference type="InterPro" id="IPR002474">
    <property type="entry name" value="CarbamoylP_synth_ssu_N"/>
</dbReference>
<dbReference type="InterPro" id="IPR036480">
    <property type="entry name" value="CarbP_synth_ssu_N_sf"/>
</dbReference>
<dbReference type="InterPro" id="IPR029062">
    <property type="entry name" value="Class_I_gatase-like"/>
</dbReference>
<dbReference type="InterPro" id="IPR035686">
    <property type="entry name" value="CPSase_GATase1"/>
</dbReference>
<dbReference type="InterPro" id="IPR017926">
    <property type="entry name" value="GATASE"/>
</dbReference>
<dbReference type="NCBIfam" id="TIGR01368">
    <property type="entry name" value="CPSaseIIsmall"/>
    <property type="match status" value="1"/>
</dbReference>
<dbReference type="NCBIfam" id="NF009475">
    <property type="entry name" value="PRK12838.1"/>
    <property type="match status" value="1"/>
</dbReference>
<dbReference type="PANTHER" id="PTHR43418:SF7">
    <property type="entry name" value="CARBAMOYL-PHOSPHATE SYNTHASE SMALL CHAIN"/>
    <property type="match status" value="1"/>
</dbReference>
<dbReference type="PANTHER" id="PTHR43418">
    <property type="entry name" value="MULTIFUNCTIONAL TRYPTOPHAN BIOSYNTHESIS PROTEIN-RELATED"/>
    <property type="match status" value="1"/>
</dbReference>
<dbReference type="Pfam" id="PF00988">
    <property type="entry name" value="CPSase_sm_chain"/>
    <property type="match status" value="1"/>
</dbReference>
<dbReference type="Pfam" id="PF00117">
    <property type="entry name" value="GATase"/>
    <property type="match status" value="1"/>
</dbReference>
<dbReference type="PRINTS" id="PR00097">
    <property type="entry name" value="ANTSNTHASEII"/>
</dbReference>
<dbReference type="PRINTS" id="PR00099">
    <property type="entry name" value="CPSGATASE"/>
</dbReference>
<dbReference type="PRINTS" id="PR00096">
    <property type="entry name" value="GATASE"/>
</dbReference>
<dbReference type="SMART" id="SM01097">
    <property type="entry name" value="CPSase_sm_chain"/>
    <property type="match status" value="1"/>
</dbReference>
<dbReference type="SUPFAM" id="SSF52021">
    <property type="entry name" value="Carbamoyl phosphate synthetase, small subunit N-terminal domain"/>
    <property type="match status" value="1"/>
</dbReference>
<dbReference type="SUPFAM" id="SSF52317">
    <property type="entry name" value="Class I glutamine amidotransferase-like"/>
    <property type="match status" value="1"/>
</dbReference>
<dbReference type="PROSITE" id="PS51273">
    <property type="entry name" value="GATASE_TYPE_1"/>
    <property type="match status" value="1"/>
</dbReference>
<name>CARA_BUCBP</name>
<proteinExistence type="inferred from homology"/>
<keyword id="KW-0028">Amino-acid biosynthesis</keyword>
<keyword id="KW-0055">Arginine biosynthesis</keyword>
<keyword id="KW-0067">ATP-binding</keyword>
<keyword id="KW-0315">Glutamine amidotransferase</keyword>
<keyword id="KW-0436">Ligase</keyword>
<keyword id="KW-0547">Nucleotide-binding</keyword>
<keyword id="KW-0665">Pyrimidine biosynthesis</keyword>
<keyword id="KW-1185">Reference proteome</keyword>
<evidence type="ECO:0000255" key="1">
    <source>
        <dbReference type="HAMAP-Rule" id="MF_01209"/>
    </source>
</evidence>
<sequence length="397" mass="44774">MKHVLRKEKTLEISATLVLKDGTIFYGKSVGIQGETYGEIVFNTSMTGYQEILTDPSYSNQIITFTYPHIGNVGINKNDCESNVIHAKGLIVRDISSIYSNHRSQMSLLNYLLNQKIIVISNIDTRKLTRILRTTGSQYGYITTKKIHSIINVLKHINILDNPITNKDLVKQVSTKKFYIWKKNVNKQKNNNITNAKLKEKIWHVVVYDFGVKKNILNMLTHRNCYLTVIPADTSAEKVLQILPDGIFLSNGPGDPRSCTYALNAINAFLKINIPIFGICLGHQLLALASGAKIIKMKFGHHGSNHPVKELKSNTVMITSQNHNYTVDTNNLPKNINITHISLFDGSIQGLQRNDKHAFSFQGHPEASPGPHDSMILFDKFIKLMKKSYNSQQKTII</sequence>
<organism>
    <name type="scientific">Buchnera aphidicola subsp. Baizongia pistaciae (strain Bp)</name>
    <dbReference type="NCBI Taxonomy" id="224915"/>
    <lineage>
        <taxon>Bacteria</taxon>
        <taxon>Pseudomonadati</taxon>
        <taxon>Pseudomonadota</taxon>
        <taxon>Gammaproteobacteria</taxon>
        <taxon>Enterobacterales</taxon>
        <taxon>Erwiniaceae</taxon>
        <taxon>Buchnera</taxon>
    </lineage>
</organism>
<protein>
    <recommendedName>
        <fullName evidence="1">Carbamoyl phosphate synthase small chain</fullName>
        <ecNumber evidence="1">6.3.5.5</ecNumber>
    </recommendedName>
    <alternativeName>
        <fullName evidence="1">Carbamoyl phosphate synthetase glutamine chain</fullName>
    </alternativeName>
</protein>